<accession>A4IIB1</accession>
<name>SDA1_XENTR</name>
<sequence length="689" mass="80052">MSGRNNNKLPTNLPQLQNLIKRDPTSYREEFLQQYKHYLSVIEIFKLQPDKPNKELSTLVMFMAQTAHCFPQYLEDFPEQLKSLLRVHHTVMDPDQRMTLCKALILLRNKNLISPSVLLELFFELLRCQDKLLRKTLYTHIVTDIKNINAKHKNNKVNTTLQNFMYTMVRDNNAIAAKISLDVMIELYRRNIWNDAKTVNVISTSCFSKVTKILVAALKFFLGKDEEEKKDSDSESEDEGPTARDLMVRYSTGKKNTKNKKKLEKAMKVLKKHKKKKRPEVFNFSAIHLVHDPQEFAEKLLKQLEASKERFEVKLMHMDLISRLVGIHELFLFNFYPFVQRFLQPHQREVTKILLYAAQATHHLVPPEISQSVLRTIANNFVTDRNSGEVMTVGINAIKELTARCPLAMTEELLQDLALYKTHKDKNVSMSARSLIQLFRSLNPEMLQKKFRGKPTEASKEARIHAYGELDAKDYIPGAEVLEVEQEKTEEPEEDDGWESASLSDDDEDGEWIDVHHSSDEEQQEVADKIQAMPAEERKAKAATVSASRLLSQEDFKKIRLAQLAKEMNNAPGKSVKRKNIEIDSDEEERSGELLSLRDIEHLHKKPKSDKETRLATVMAGRTDRKEFVRKKSKMNPHASSTNKEKKKNKNFMMMRYSQNIRSKNKRSFRDKQIALRDSLLKKRKRLMK</sequence>
<protein>
    <recommendedName>
        <fullName>Protein SDA1 homolog</fullName>
    </recommendedName>
    <alternativeName>
        <fullName>SDA1 domain-containing protein 1</fullName>
    </alternativeName>
</protein>
<keyword id="KW-0175">Coiled coil</keyword>
<keyword id="KW-0539">Nucleus</keyword>
<keyword id="KW-0653">Protein transport</keyword>
<keyword id="KW-1185">Reference proteome</keyword>
<keyword id="KW-0690">Ribosome biogenesis</keyword>
<keyword id="KW-0813">Transport</keyword>
<feature type="chain" id="PRO_0000328431" description="Protein SDA1 homolog">
    <location>
        <begin position="1"/>
        <end position="689"/>
    </location>
</feature>
<feature type="region of interest" description="Disordered" evidence="3">
    <location>
        <begin position="485"/>
        <end position="512"/>
    </location>
</feature>
<feature type="region of interest" description="Disordered" evidence="3">
    <location>
        <begin position="606"/>
        <end position="689"/>
    </location>
</feature>
<feature type="coiled-coil region" evidence="2">
    <location>
        <begin position="254"/>
        <end position="319"/>
    </location>
</feature>
<feature type="compositionally biased region" description="Basic and acidic residues" evidence="3">
    <location>
        <begin position="668"/>
        <end position="681"/>
    </location>
</feature>
<proteinExistence type="evidence at transcript level"/>
<gene>
    <name type="primary">sdad1</name>
</gene>
<organism>
    <name type="scientific">Xenopus tropicalis</name>
    <name type="common">Western clawed frog</name>
    <name type="synonym">Silurana tropicalis</name>
    <dbReference type="NCBI Taxonomy" id="8364"/>
    <lineage>
        <taxon>Eukaryota</taxon>
        <taxon>Metazoa</taxon>
        <taxon>Chordata</taxon>
        <taxon>Craniata</taxon>
        <taxon>Vertebrata</taxon>
        <taxon>Euteleostomi</taxon>
        <taxon>Amphibia</taxon>
        <taxon>Batrachia</taxon>
        <taxon>Anura</taxon>
        <taxon>Pipoidea</taxon>
        <taxon>Pipidae</taxon>
        <taxon>Xenopodinae</taxon>
        <taxon>Xenopus</taxon>
        <taxon>Silurana</taxon>
    </lineage>
</organism>
<reference key="1">
    <citation type="submission" date="2007-03" db="EMBL/GenBank/DDBJ databases">
        <authorList>
            <consortium name="NIH - Xenopus Gene Collection (XGC) project"/>
        </authorList>
    </citation>
    <scope>NUCLEOTIDE SEQUENCE [LARGE SCALE MRNA]</scope>
    <source>
        <tissue>Embryo</tissue>
    </source>
</reference>
<comment type="function">
    <text evidence="1">Required for 60S pre-ribosomal subunits export to the cytoplasm.</text>
</comment>
<comment type="subcellular location">
    <subcellularLocation>
        <location evidence="1">Nucleus</location>
        <location evidence="1">Nucleolus</location>
    </subcellularLocation>
</comment>
<comment type="similarity">
    <text evidence="4">Belongs to the SDA1 family.</text>
</comment>
<dbReference type="EMBL" id="BC135943">
    <property type="protein sequence ID" value="AAI35944.1"/>
    <property type="molecule type" value="mRNA"/>
</dbReference>
<dbReference type="RefSeq" id="NP_001095942.1">
    <property type="nucleotide sequence ID" value="NM_001102472.1"/>
</dbReference>
<dbReference type="SMR" id="A4IIB1"/>
<dbReference type="FunCoup" id="A4IIB1">
    <property type="interactions" value="2685"/>
</dbReference>
<dbReference type="STRING" id="8364.ENSXETP00000045249"/>
<dbReference type="PaxDb" id="8364-ENSXETP00000045076"/>
<dbReference type="GeneID" id="100124509"/>
<dbReference type="KEGG" id="xtr:100124509"/>
<dbReference type="AGR" id="Xenbase:XB-GENE-1008732"/>
<dbReference type="CTD" id="55153"/>
<dbReference type="eggNOG" id="KOG2229">
    <property type="taxonomic scope" value="Eukaryota"/>
</dbReference>
<dbReference type="InParanoid" id="A4IIB1"/>
<dbReference type="OMA" id="AMYKTYK"/>
<dbReference type="OrthoDB" id="2196187at2759"/>
<dbReference type="Proteomes" id="UP000008143">
    <property type="component" value="Chromosome 1"/>
</dbReference>
<dbReference type="GO" id="GO:0005730">
    <property type="term" value="C:nucleolus"/>
    <property type="evidence" value="ECO:0007669"/>
    <property type="project" value="UniProtKB-SubCell"/>
</dbReference>
<dbReference type="GO" id="GO:0015031">
    <property type="term" value="P:protein transport"/>
    <property type="evidence" value="ECO:0007669"/>
    <property type="project" value="UniProtKB-KW"/>
</dbReference>
<dbReference type="GO" id="GO:0042273">
    <property type="term" value="P:ribosomal large subunit biogenesis"/>
    <property type="evidence" value="ECO:0007669"/>
    <property type="project" value="InterPro"/>
</dbReference>
<dbReference type="GO" id="GO:0000055">
    <property type="term" value="P:ribosomal large subunit export from nucleus"/>
    <property type="evidence" value="ECO:0007669"/>
    <property type="project" value="InterPro"/>
</dbReference>
<dbReference type="InterPro" id="IPR016024">
    <property type="entry name" value="ARM-type_fold"/>
</dbReference>
<dbReference type="InterPro" id="IPR027312">
    <property type="entry name" value="Sda1"/>
</dbReference>
<dbReference type="InterPro" id="IPR048292">
    <property type="entry name" value="SDA1_C"/>
</dbReference>
<dbReference type="InterPro" id="IPR007949">
    <property type="entry name" value="SDA1_MD"/>
</dbReference>
<dbReference type="InterPro" id="IPR012977">
    <property type="entry name" value="SDA1_N"/>
</dbReference>
<dbReference type="PANTHER" id="PTHR12730">
    <property type="entry name" value="HSDA/SDA1-RELATED"/>
    <property type="match status" value="1"/>
</dbReference>
<dbReference type="PANTHER" id="PTHR12730:SF0">
    <property type="entry name" value="PROTEIN SDA1 HOMOLOG"/>
    <property type="match status" value="1"/>
</dbReference>
<dbReference type="Pfam" id="PF21638">
    <property type="entry name" value="SDA1_C"/>
    <property type="match status" value="1"/>
</dbReference>
<dbReference type="Pfam" id="PF05285">
    <property type="entry name" value="SDA1_dom"/>
    <property type="match status" value="1"/>
</dbReference>
<dbReference type="Pfam" id="PF08158">
    <property type="entry name" value="SDA1_HEAT"/>
    <property type="match status" value="1"/>
</dbReference>
<dbReference type="SUPFAM" id="SSF48371">
    <property type="entry name" value="ARM repeat"/>
    <property type="match status" value="1"/>
</dbReference>
<evidence type="ECO:0000250" key="1"/>
<evidence type="ECO:0000255" key="2"/>
<evidence type="ECO:0000256" key="3">
    <source>
        <dbReference type="SAM" id="MobiDB-lite"/>
    </source>
</evidence>
<evidence type="ECO:0000305" key="4"/>